<sequence>MRLTRYFLPILKETPKEAEIASHRLMLRAGMLRQEAAGIYAWLPLGFRVLKKIERIVREEQNRAGAIELLMPTLQLADLWRESGRYDAYGPEMLRIADRHKRELLYGPTNEEMITEIFRSYVKSYRNLPLNLYHIQWKFRDEQRPRFGVMRGREFLMKDAYSFDLDEAAARLSYNKMFVAYLRTFARMGLKAIPMRAETGPIGGDLSHEFIVLAETGESGVFCNKDVLDLPVPGEDVDYDSDLTPIIKQWTELYAATEDVHDAARYETEVPAEKRVNTRGIEVGQIFYFGTKYSDSMKALVVGPDGVEKPVHSGSYGVGVSRLVGAIIEACHDENGIKWPEAVAPFTVAILNLKQGASDTDAACEKLYRALTANGVDVLYDDTDQRPGGKFATADLIGIPWQILIGPKGLAEGKVEIKCRADGSRELMSPEDALARFGAKA</sequence>
<proteinExistence type="inferred from homology"/>
<name>SYP_AFIC5</name>
<gene>
    <name evidence="1" type="primary">proS</name>
    <name type="ordered locus">OCAR_5947</name>
    <name type="ordered locus">OCA5_c20750</name>
</gene>
<dbReference type="EC" id="6.1.1.15" evidence="1"/>
<dbReference type="EMBL" id="CP001196">
    <property type="protein sequence ID" value="ACI93068.1"/>
    <property type="molecule type" value="Genomic_DNA"/>
</dbReference>
<dbReference type="EMBL" id="CP002826">
    <property type="protein sequence ID" value="AEI06782.1"/>
    <property type="molecule type" value="Genomic_DNA"/>
</dbReference>
<dbReference type="RefSeq" id="WP_012563095.1">
    <property type="nucleotide sequence ID" value="NC_015684.1"/>
</dbReference>
<dbReference type="SMR" id="B6JH58"/>
<dbReference type="STRING" id="504832.OCA5_c20750"/>
<dbReference type="KEGG" id="oca:OCAR_5947"/>
<dbReference type="KEGG" id="ocg:OCA5_c20750"/>
<dbReference type="PATRIC" id="fig|504832.7.peg.2197"/>
<dbReference type="eggNOG" id="COG0442">
    <property type="taxonomic scope" value="Bacteria"/>
</dbReference>
<dbReference type="HOGENOM" id="CLU_016739_4_2_5"/>
<dbReference type="OrthoDB" id="9809052at2"/>
<dbReference type="Proteomes" id="UP000007730">
    <property type="component" value="Chromosome"/>
</dbReference>
<dbReference type="GO" id="GO:0005829">
    <property type="term" value="C:cytosol"/>
    <property type="evidence" value="ECO:0007669"/>
    <property type="project" value="TreeGrafter"/>
</dbReference>
<dbReference type="GO" id="GO:0005524">
    <property type="term" value="F:ATP binding"/>
    <property type="evidence" value="ECO:0007669"/>
    <property type="project" value="UniProtKB-UniRule"/>
</dbReference>
<dbReference type="GO" id="GO:0004827">
    <property type="term" value="F:proline-tRNA ligase activity"/>
    <property type="evidence" value="ECO:0007669"/>
    <property type="project" value="UniProtKB-UniRule"/>
</dbReference>
<dbReference type="GO" id="GO:0006433">
    <property type="term" value="P:prolyl-tRNA aminoacylation"/>
    <property type="evidence" value="ECO:0007669"/>
    <property type="project" value="UniProtKB-UniRule"/>
</dbReference>
<dbReference type="CDD" id="cd00861">
    <property type="entry name" value="ProRS_anticodon_short"/>
    <property type="match status" value="1"/>
</dbReference>
<dbReference type="CDD" id="cd00779">
    <property type="entry name" value="ProRS_core_prok"/>
    <property type="match status" value="1"/>
</dbReference>
<dbReference type="FunFam" id="3.30.930.10:FF:000042">
    <property type="entry name" value="probable proline--tRNA ligase, mitochondrial"/>
    <property type="match status" value="1"/>
</dbReference>
<dbReference type="FunFam" id="3.40.50.800:FF:000032">
    <property type="entry name" value="Proline--tRNA ligase"/>
    <property type="match status" value="1"/>
</dbReference>
<dbReference type="Gene3D" id="3.40.50.800">
    <property type="entry name" value="Anticodon-binding domain"/>
    <property type="match status" value="1"/>
</dbReference>
<dbReference type="Gene3D" id="3.30.930.10">
    <property type="entry name" value="Bira Bifunctional Protein, Domain 2"/>
    <property type="match status" value="1"/>
</dbReference>
<dbReference type="HAMAP" id="MF_01570">
    <property type="entry name" value="Pro_tRNA_synth_type2"/>
    <property type="match status" value="1"/>
</dbReference>
<dbReference type="InterPro" id="IPR002314">
    <property type="entry name" value="aa-tRNA-synt_IIb"/>
</dbReference>
<dbReference type="InterPro" id="IPR006195">
    <property type="entry name" value="aa-tRNA-synth_II"/>
</dbReference>
<dbReference type="InterPro" id="IPR045864">
    <property type="entry name" value="aa-tRNA-synth_II/BPL/LPL"/>
</dbReference>
<dbReference type="InterPro" id="IPR004154">
    <property type="entry name" value="Anticodon-bd"/>
</dbReference>
<dbReference type="InterPro" id="IPR036621">
    <property type="entry name" value="Anticodon-bd_dom_sf"/>
</dbReference>
<dbReference type="InterPro" id="IPR002316">
    <property type="entry name" value="Pro-tRNA-ligase_IIa"/>
</dbReference>
<dbReference type="InterPro" id="IPR004500">
    <property type="entry name" value="Pro-tRNA-synth_IIa_bac-type"/>
</dbReference>
<dbReference type="InterPro" id="IPR050062">
    <property type="entry name" value="Pro-tRNA_synthetase"/>
</dbReference>
<dbReference type="InterPro" id="IPR023716">
    <property type="entry name" value="Prolyl-tRNA_ligase_IIa_type2"/>
</dbReference>
<dbReference type="InterPro" id="IPR044140">
    <property type="entry name" value="ProRS_anticodon_short"/>
</dbReference>
<dbReference type="InterPro" id="IPR033730">
    <property type="entry name" value="ProRS_core_prok"/>
</dbReference>
<dbReference type="NCBIfam" id="NF008979">
    <property type="entry name" value="PRK12325.1"/>
    <property type="match status" value="1"/>
</dbReference>
<dbReference type="NCBIfam" id="TIGR00409">
    <property type="entry name" value="proS_fam_II"/>
    <property type="match status" value="1"/>
</dbReference>
<dbReference type="PANTHER" id="PTHR42753">
    <property type="entry name" value="MITOCHONDRIAL RIBOSOME PROTEIN L39/PROLYL-TRNA LIGASE FAMILY MEMBER"/>
    <property type="match status" value="1"/>
</dbReference>
<dbReference type="PANTHER" id="PTHR42753:SF2">
    <property type="entry name" value="PROLINE--TRNA LIGASE"/>
    <property type="match status" value="1"/>
</dbReference>
<dbReference type="Pfam" id="PF03129">
    <property type="entry name" value="HGTP_anticodon"/>
    <property type="match status" value="1"/>
</dbReference>
<dbReference type="Pfam" id="PF00587">
    <property type="entry name" value="tRNA-synt_2b"/>
    <property type="match status" value="1"/>
</dbReference>
<dbReference type="PRINTS" id="PR01046">
    <property type="entry name" value="TRNASYNTHPRO"/>
</dbReference>
<dbReference type="SUPFAM" id="SSF52954">
    <property type="entry name" value="Class II aaRS ABD-related"/>
    <property type="match status" value="1"/>
</dbReference>
<dbReference type="SUPFAM" id="SSF55681">
    <property type="entry name" value="Class II aaRS and biotin synthetases"/>
    <property type="match status" value="1"/>
</dbReference>
<dbReference type="PROSITE" id="PS50862">
    <property type="entry name" value="AA_TRNA_LIGASE_II"/>
    <property type="match status" value="1"/>
</dbReference>
<organism>
    <name type="scientific">Afipia carboxidovorans (strain ATCC 49405 / DSM 1227 / KCTC 32145 / OM5)</name>
    <name type="common">Oligotropha carboxidovorans</name>
    <dbReference type="NCBI Taxonomy" id="504832"/>
    <lineage>
        <taxon>Bacteria</taxon>
        <taxon>Pseudomonadati</taxon>
        <taxon>Pseudomonadota</taxon>
        <taxon>Alphaproteobacteria</taxon>
        <taxon>Hyphomicrobiales</taxon>
        <taxon>Nitrobacteraceae</taxon>
        <taxon>Afipia</taxon>
    </lineage>
</organism>
<comment type="function">
    <text evidence="1">Catalyzes the attachment of proline to tRNA(Pro) in a two-step reaction: proline is first activated by ATP to form Pro-AMP and then transferred to the acceptor end of tRNA(Pro).</text>
</comment>
<comment type="catalytic activity">
    <reaction evidence="1">
        <text>tRNA(Pro) + L-proline + ATP = L-prolyl-tRNA(Pro) + AMP + diphosphate</text>
        <dbReference type="Rhea" id="RHEA:14305"/>
        <dbReference type="Rhea" id="RHEA-COMP:9700"/>
        <dbReference type="Rhea" id="RHEA-COMP:9702"/>
        <dbReference type="ChEBI" id="CHEBI:30616"/>
        <dbReference type="ChEBI" id="CHEBI:33019"/>
        <dbReference type="ChEBI" id="CHEBI:60039"/>
        <dbReference type="ChEBI" id="CHEBI:78442"/>
        <dbReference type="ChEBI" id="CHEBI:78532"/>
        <dbReference type="ChEBI" id="CHEBI:456215"/>
        <dbReference type="EC" id="6.1.1.15"/>
    </reaction>
</comment>
<comment type="subunit">
    <text evidence="1">Homodimer.</text>
</comment>
<comment type="subcellular location">
    <subcellularLocation>
        <location evidence="1">Cytoplasm</location>
    </subcellularLocation>
</comment>
<comment type="similarity">
    <text evidence="1">Belongs to the class-II aminoacyl-tRNA synthetase family. ProS type 2 subfamily.</text>
</comment>
<protein>
    <recommendedName>
        <fullName evidence="1">Proline--tRNA ligase</fullName>
        <ecNumber evidence="1">6.1.1.15</ecNumber>
    </recommendedName>
    <alternativeName>
        <fullName evidence="1">Prolyl-tRNA synthetase</fullName>
        <shortName evidence="1">ProRS</shortName>
    </alternativeName>
</protein>
<keyword id="KW-0030">Aminoacyl-tRNA synthetase</keyword>
<keyword id="KW-0067">ATP-binding</keyword>
<keyword id="KW-0963">Cytoplasm</keyword>
<keyword id="KW-0436">Ligase</keyword>
<keyword id="KW-0547">Nucleotide-binding</keyword>
<keyword id="KW-0648">Protein biosynthesis</keyword>
<keyword id="KW-1185">Reference proteome</keyword>
<feature type="chain" id="PRO_1000199454" description="Proline--tRNA ligase">
    <location>
        <begin position="1"/>
        <end position="441"/>
    </location>
</feature>
<evidence type="ECO:0000255" key="1">
    <source>
        <dbReference type="HAMAP-Rule" id="MF_01570"/>
    </source>
</evidence>
<accession>B6JH58</accession>
<accession>F8BWL4</accession>
<reference key="1">
    <citation type="journal article" date="2008" name="J. Bacteriol.">
        <title>Genome sequence of the chemolithoautotrophic bacterium Oligotropha carboxidovorans OM5T.</title>
        <authorList>
            <person name="Paul D."/>
            <person name="Bridges S."/>
            <person name="Burgess S.C."/>
            <person name="Dandass Y."/>
            <person name="Lawrence M.L."/>
        </authorList>
    </citation>
    <scope>NUCLEOTIDE SEQUENCE [LARGE SCALE GENOMIC DNA]</scope>
    <source>
        <strain>ATCC 49405 / DSM 1227 / KCTC 32145 / OM5</strain>
    </source>
</reference>
<reference key="2">
    <citation type="journal article" date="2011" name="J. Bacteriol.">
        <title>Complete genome sequences of the chemolithoautotrophic Oligotropha carboxidovorans strains OM4 and OM5.</title>
        <authorList>
            <person name="Volland S."/>
            <person name="Rachinger M."/>
            <person name="Strittmatter A."/>
            <person name="Daniel R."/>
            <person name="Gottschalk G."/>
            <person name="Meyer O."/>
        </authorList>
    </citation>
    <scope>NUCLEOTIDE SEQUENCE [LARGE SCALE GENOMIC DNA]</scope>
    <source>
        <strain>ATCC 49405 / DSM 1227 / KCTC 32145 / OM5</strain>
    </source>
</reference>